<name>AMO1_SCHPO</name>
<accession>O74315</accession>
<evidence type="ECO:0000255" key="1">
    <source>
        <dbReference type="PROSITE-ProRule" id="PRU00723"/>
    </source>
</evidence>
<evidence type="ECO:0000256" key="2">
    <source>
        <dbReference type="SAM" id="MobiDB-lite"/>
    </source>
</evidence>
<evidence type="ECO:0000269" key="3">
    <source>
    </source>
</evidence>
<organism>
    <name type="scientific">Schizosaccharomyces pombe (strain 972 / ATCC 24843)</name>
    <name type="common">Fission yeast</name>
    <dbReference type="NCBI Taxonomy" id="284812"/>
    <lineage>
        <taxon>Eukaryota</taxon>
        <taxon>Fungi</taxon>
        <taxon>Dikarya</taxon>
        <taxon>Ascomycota</taxon>
        <taxon>Taphrinomycotina</taxon>
        <taxon>Schizosaccharomycetes</taxon>
        <taxon>Schizosaccharomycetales</taxon>
        <taxon>Schizosaccharomycetaceae</taxon>
        <taxon>Schizosaccharomyces</taxon>
    </lineage>
</organism>
<reference key="1">
    <citation type="journal article" date="2002" name="Nature">
        <title>The genome sequence of Schizosaccharomyces pombe.</title>
        <authorList>
            <person name="Wood V."/>
            <person name="Gwilliam R."/>
            <person name="Rajandream M.A."/>
            <person name="Lyne M.H."/>
            <person name="Lyne R."/>
            <person name="Stewart A."/>
            <person name="Sgouros J.G."/>
            <person name="Peat N."/>
            <person name="Hayles J."/>
            <person name="Baker S.G."/>
            <person name="Basham D."/>
            <person name="Bowman S."/>
            <person name="Brooks K."/>
            <person name="Brown D."/>
            <person name="Brown S."/>
            <person name="Chillingworth T."/>
            <person name="Churcher C.M."/>
            <person name="Collins M."/>
            <person name="Connor R."/>
            <person name="Cronin A."/>
            <person name="Davis P."/>
            <person name="Feltwell T."/>
            <person name="Fraser A."/>
            <person name="Gentles S."/>
            <person name="Goble A."/>
            <person name="Hamlin N."/>
            <person name="Harris D.E."/>
            <person name="Hidalgo J."/>
            <person name="Hodgson G."/>
            <person name="Holroyd S."/>
            <person name="Hornsby T."/>
            <person name="Howarth S."/>
            <person name="Huckle E.J."/>
            <person name="Hunt S."/>
            <person name="Jagels K."/>
            <person name="James K.D."/>
            <person name="Jones L."/>
            <person name="Jones M."/>
            <person name="Leather S."/>
            <person name="McDonald S."/>
            <person name="McLean J."/>
            <person name="Mooney P."/>
            <person name="Moule S."/>
            <person name="Mungall K.L."/>
            <person name="Murphy L.D."/>
            <person name="Niblett D."/>
            <person name="Odell C."/>
            <person name="Oliver K."/>
            <person name="O'Neil S."/>
            <person name="Pearson D."/>
            <person name="Quail M.A."/>
            <person name="Rabbinowitsch E."/>
            <person name="Rutherford K.M."/>
            <person name="Rutter S."/>
            <person name="Saunders D."/>
            <person name="Seeger K."/>
            <person name="Sharp S."/>
            <person name="Skelton J."/>
            <person name="Simmonds M.N."/>
            <person name="Squares R."/>
            <person name="Squares S."/>
            <person name="Stevens K."/>
            <person name="Taylor K."/>
            <person name="Taylor R.G."/>
            <person name="Tivey A."/>
            <person name="Walsh S.V."/>
            <person name="Warren T."/>
            <person name="Whitehead S."/>
            <person name="Woodward J.R."/>
            <person name="Volckaert G."/>
            <person name="Aert R."/>
            <person name="Robben J."/>
            <person name="Grymonprez B."/>
            <person name="Weltjens I."/>
            <person name="Vanstreels E."/>
            <person name="Rieger M."/>
            <person name="Schaefer M."/>
            <person name="Mueller-Auer S."/>
            <person name="Gabel C."/>
            <person name="Fuchs M."/>
            <person name="Duesterhoeft A."/>
            <person name="Fritzc C."/>
            <person name="Holzer E."/>
            <person name="Moestl D."/>
            <person name="Hilbert H."/>
            <person name="Borzym K."/>
            <person name="Langer I."/>
            <person name="Beck A."/>
            <person name="Lehrach H."/>
            <person name="Reinhardt R."/>
            <person name="Pohl T.M."/>
            <person name="Eger P."/>
            <person name="Zimmermann W."/>
            <person name="Wedler H."/>
            <person name="Wambutt R."/>
            <person name="Purnelle B."/>
            <person name="Goffeau A."/>
            <person name="Cadieu E."/>
            <person name="Dreano S."/>
            <person name="Gloux S."/>
            <person name="Lelaure V."/>
            <person name="Mottier S."/>
            <person name="Galibert F."/>
            <person name="Aves S.J."/>
            <person name="Xiang Z."/>
            <person name="Hunt C."/>
            <person name="Moore K."/>
            <person name="Hurst S.M."/>
            <person name="Lucas M."/>
            <person name="Rochet M."/>
            <person name="Gaillardin C."/>
            <person name="Tallada V.A."/>
            <person name="Garzon A."/>
            <person name="Thode G."/>
            <person name="Daga R.R."/>
            <person name="Cruzado L."/>
            <person name="Jimenez J."/>
            <person name="Sanchez M."/>
            <person name="del Rey F."/>
            <person name="Benito J."/>
            <person name="Dominguez A."/>
            <person name="Revuelta J.L."/>
            <person name="Moreno S."/>
            <person name="Armstrong J."/>
            <person name="Forsburg S.L."/>
            <person name="Cerutti L."/>
            <person name="Lowe T."/>
            <person name="McCombie W.R."/>
            <person name="Paulsen I."/>
            <person name="Potashkin J."/>
            <person name="Shpakovski G.V."/>
            <person name="Ussery D."/>
            <person name="Barrell B.G."/>
            <person name="Nurse P."/>
        </authorList>
    </citation>
    <scope>NUCLEOTIDE SEQUENCE [LARGE SCALE GENOMIC DNA]</scope>
    <source>
        <strain>972 / ATCC 24843</strain>
    </source>
</reference>
<reference key="2">
    <citation type="journal article" date="2005" name="J. Cell Sci.">
        <title>The nuclear rim protein Amo1 is required for proper microtubule cytoskeleton organisation in fission yeast.</title>
        <authorList>
            <person name="Pardo M."/>
            <person name="Nurse P."/>
        </authorList>
    </citation>
    <scope>FUNCTION</scope>
    <scope>SUBCELLULAR LOCATION</scope>
</reference>
<feature type="chain" id="PRO_0000064588" description="Nucleoporin-like protein amo1">
    <location>
        <begin position="1"/>
        <end position="475"/>
    </location>
</feature>
<feature type="zinc finger region" description="C3H1-type" evidence="1">
    <location>
        <begin position="1"/>
        <end position="25"/>
    </location>
</feature>
<feature type="region of interest" description="Disordered" evidence="2">
    <location>
        <begin position="165"/>
        <end position="208"/>
    </location>
</feature>
<feature type="region of interest" description="Disordered" evidence="2">
    <location>
        <begin position="220"/>
        <end position="252"/>
    </location>
</feature>
<feature type="compositionally biased region" description="Polar residues" evidence="2">
    <location>
        <begin position="165"/>
        <end position="182"/>
    </location>
</feature>
<feature type="compositionally biased region" description="Low complexity" evidence="2">
    <location>
        <begin position="183"/>
        <end position="204"/>
    </location>
</feature>
<feature type="compositionally biased region" description="Polar residues" evidence="2">
    <location>
        <begin position="220"/>
        <end position="242"/>
    </location>
</feature>
<feature type="compositionally biased region" description="Low complexity" evidence="2">
    <location>
        <begin position="243"/>
        <end position="252"/>
    </location>
</feature>
<gene>
    <name type="primary">amo1</name>
    <name type="ORF">SPBC15D4.10c</name>
</gene>
<sequence>MVVCKYFLQNRCRYGTNCKNQHTVPSNGQNAFSKVNVFRPENGRPPIWVQRRLKRSDLDNLLPNRRMKDINDDLKNAKPQWPFTGYSVVENLPSIYEGDVSPEELRWWAYQAKATNNMQAYEQRQKQLMDDVEAKAAAVKRSPAAAFDEMRNKLVGKTNYKSIFDKSTSNSTVTSNQFNKPTQNSPFNSFSNNNNSFNNNQQANDIFGAPTTSAFTSQLNASPFSQNTSSNSFTGSNPVQNNPSSFGSSSFGSATSGPSAFGGISQPNSSFVNSGQGIPNSSFSSFSQVASGFSQSQNVNDPSSIFGPTVASGFGIQNQPQQSAFQNLNTQFSLPNNSQPVFGHTSLTQPVNPNGFTVQPPATFMQQPQGPFVPPNTTFESPFANVTSKISASGFSNDNPANKNIIQTPMFGSSNTIDGPINPIGASSIQTLDDQVEMSNSNQNLAFPPEMIQQFEAQDFIPGKVPTTAPPPQFC</sequence>
<comment type="function">
    <text evidence="3">Involved in the cell polarity process where it is required for the correct termination of microtubule growth at the cell ends during interphase.</text>
</comment>
<comment type="subcellular location">
    <subcellularLocation>
        <location evidence="3">Nucleus</location>
    </subcellularLocation>
    <text>Nucleus; nuclear rim.</text>
</comment>
<protein>
    <recommendedName>
        <fullName>Nucleoporin-like protein amo1</fullName>
    </recommendedName>
    <alternativeName>
        <fullName>Aberrant microtubule protein 1</fullName>
    </alternativeName>
</protein>
<proteinExistence type="predicted"/>
<keyword id="KW-0131">Cell cycle</keyword>
<keyword id="KW-0132">Cell division</keyword>
<keyword id="KW-0479">Metal-binding</keyword>
<keyword id="KW-0539">Nucleus</keyword>
<keyword id="KW-1185">Reference proteome</keyword>
<keyword id="KW-0862">Zinc</keyword>
<keyword id="KW-0863">Zinc-finger</keyword>
<dbReference type="EMBL" id="CU329671">
    <property type="protein sequence ID" value="CAA20485.1"/>
    <property type="molecule type" value="Genomic_DNA"/>
</dbReference>
<dbReference type="PIR" id="T39486">
    <property type="entry name" value="T39486"/>
</dbReference>
<dbReference type="RefSeq" id="NP_596250.1">
    <property type="nucleotide sequence ID" value="NM_001022169.2"/>
</dbReference>
<dbReference type="BioGRID" id="276456">
    <property type="interactions" value="107"/>
</dbReference>
<dbReference type="FunCoup" id="O74315">
    <property type="interactions" value="64"/>
</dbReference>
<dbReference type="STRING" id="284812.O74315"/>
<dbReference type="iPTMnet" id="O74315"/>
<dbReference type="PaxDb" id="4896-SPBC15D4.10c.1"/>
<dbReference type="EnsemblFungi" id="SPBC15D4.10c.1">
    <property type="protein sequence ID" value="SPBC15D4.10c.1:pep"/>
    <property type="gene ID" value="SPBC15D4.10c"/>
</dbReference>
<dbReference type="GeneID" id="2539911"/>
<dbReference type="KEGG" id="spo:2539911"/>
<dbReference type="PomBase" id="SPBC15D4.10c">
    <property type="gene designation" value="amo1"/>
</dbReference>
<dbReference type="VEuPathDB" id="FungiDB:SPBC15D4.10c"/>
<dbReference type="eggNOG" id="KOG0845">
    <property type="taxonomic scope" value="Eukaryota"/>
</dbReference>
<dbReference type="HOGENOM" id="CLU_575103_0_0_1"/>
<dbReference type="InParanoid" id="O74315"/>
<dbReference type="OMA" id="PNRHDIC"/>
<dbReference type="Reactome" id="R-SPO-159227">
    <property type="pathway name" value="Transport of the SLBP independent Mature mRNA"/>
</dbReference>
<dbReference type="Reactome" id="R-SPO-159231">
    <property type="pathway name" value="Transport of Mature mRNA Derived from an Intronless Transcript"/>
</dbReference>
<dbReference type="Reactome" id="R-SPO-159236">
    <property type="pathway name" value="Transport of Mature mRNA derived from an Intron-Containing Transcript"/>
</dbReference>
<dbReference type="Reactome" id="R-SPO-3371453">
    <property type="pathway name" value="Regulation of HSF1-mediated heat shock response"/>
</dbReference>
<dbReference type="Reactome" id="R-SPO-4085377">
    <property type="pathway name" value="SUMOylation of SUMOylation proteins"/>
</dbReference>
<dbReference type="Reactome" id="R-SPO-4551638">
    <property type="pathway name" value="SUMOylation of chromatin organization proteins"/>
</dbReference>
<dbReference type="Reactome" id="R-SPO-4570464">
    <property type="pathway name" value="SUMOylation of RNA binding proteins"/>
</dbReference>
<dbReference type="Reactome" id="R-SPO-5578749">
    <property type="pathway name" value="Transcriptional regulation by small RNAs"/>
</dbReference>
<dbReference type="PRO" id="PR:O74315"/>
<dbReference type="Proteomes" id="UP000002485">
    <property type="component" value="Chromosome II"/>
</dbReference>
<dbReference type="GO" id="GO:0005737">
    <property type="term" value="C:cytoplasm"/>
    <property type="evidence" value="ECO:0000314"/>
    <property type="project" value="PomBase"/>
</dbReference>
<dbReference type="GO" id="GO:0034399">
    <property type="term" value="C:nuclear periphery"/>
    <property type="evidence" value="ECO:0000314"/>
    <property type="project" value="PomBase"/>
</dbReference>
<dbReference type="GO" id="GO:0005643">
    <property type="term" value="C:nuclear pore"/>
    <property type="evidence" value="ECO:0000314"/>
    <property type="project" value="PomBase"/>
</dbReference>
<dbReference type="GO" id="GO:0005634">
    <property type="term" value="C:nucleus"/>
    <property type="evidence" value="ECO:0007005"/>
    <property type="project" value="PomBase"/>
</dbReference>
<dbReference type="GO" id="GO:0008270">
    <property type="term" value="F:zinc ion binding"/>
    <property type="evidence" value="ECO:0007669"/>
    <property type="project" value="UniProtKB-KW"/>
</dbReference>
<dbReference type="GO" id="GO:0051301">
    <property type="term" value="P:cell division"/>
    <property type="evidence" value="ECO:0007669"/>
    <property type="project" value="UniProtKB-KW"/>
</dbReference>
<dbReference type="Gene3D" id="4.10.1000.10">
    <property type="entry name" value="Zinc finger, CCCH-type"/>
    <property type="match status" value="1"/>
</dbReference>
<dbReference type="InterPro" id="IPR051767">
    <property type="entry name" value="Nucleoporin_NUP42"/>
</dbReference>
<dbReference type="InterPro" id="IPR000571">
    <property type="entry name" value="Znf_CCCH"/>
</dbReference>
<dbReference type="PANTHER" id="PTHR46527:SF1">
    <property type="entry name" value="NUCLEOPORIN NUP42"/>
    <property type="match status" value="1"/>
</dbReference>
<dbReference type="PANTHER" id="PTHR46527">
    <property type="entry name" value="NUCLEOPORIN-LIKE PROTEIN 2"/>
    <property type="match status" value="1"/>
</dbReference>
<dbReference type="PROSITE" id="PS50103">
    <property type="entry name" value="ZF_C3H1"/>
    <property type="match status" value="1"/>
</dbReference>